<reference key="1">
    <citation type="journal article" date="1997" name="Nature">
        <title>The complete genome sequence of the hyperthermophilic, sulphate-reducing archaeon Archaeoglobus fulgidus.</title>
        <authorList>
            <person name="Klenk H.-P."/>
            <person name="Clayton R.A."/>
            <person name="Tomb J.-F."/>
            <person name="White O."/>
            <person name="Nelson K.E."/>
            <person name="Ketchum K.A."/>
            <person name="Dodson R.J."/>
            <person name="Gwinn M.L."/>
            <person name="Hickey E.K."/>
            <person name="Peterson J.D."/>
            <person name="Richardson D.L."/>
            <person name="Kerlavage A.R."/>
            <person name="Graham D.E."/>
            <person name="Kyrpides N.C."/>
            <person name="Fleischmann R.D."/>
            <person name="Quackenbush J."/>
            <person name="Lee N.H."/>
            <person name="Sutton G.G."/>
            <person name="Gill S.R."/>
            <person name="Kirkness E.F."/>
            <person name="Dougherty B.A."/>
            <person name="McKenney K."/>
            <person name="Adams M.D."/>
            <person name="Loftus B.J."/>
            <person name="Peterson S.N."/>
            <person name="Reich C.I."/>
            <person name="McNeil L.K."/>
            <person name="Badger J.H."/>
            <person name="Glodek A."/>
            <person name="Zhou L."/>
            <person name="Overbeek R."/>
            <person name="Gocayne J.D."/>
            <person name="Weidman J.F."/>
            <person name="McDonald L.A."/>
            <person name="Utterback T.R."/>
            <person name="Cotton M.D."/>
            <person name="Spriggs T."/>
            <person name="Artiach P."/>
            <person name="Kaine B.P."/>
            <person name="Sykes S.M."/>
            <person name="Sadow P.W."/>
            <person name="D'Andrea K.P."/>
            <person name="Bowman C."/>
            <person name="Fujii C."/>
            <person name="Garland S.A."/>
            <person name="Mason T.M."/>
            <person name="Olsen G.J."/>
            <person name="Fraser C.M."/>
            <person name="Smith H.O."/>
            <person name="Woese C.R."/>
            <person name="Venter J.C."/>
        </authorList>
    </citation>
    <scope>NUCLEOTIDE SEQUENCE [LARGE SCALE GENOMIC DNA]</scope>
    <source>
        <strain>ATCC 49558 / DSM 4304 / JCM 9628 / NBRC 100126 / VC-16</strain>
    </source>
</reference>
<organism>
    <name type="scientific">Archaeoglobus fulgidus (strain ATCC 49558 / DSM 4304 / JCM 9628 / NBRC 100126 / VC-16)</name>
    <dbReference type="NCBI Taxonomy" id="224325"/>
    <lineage>
        <taxon>Archaea</taxon>
        <taxon>Methanobacteriati</taxon>
        <taxon>Methanobacteriota</taxon>
        <taxon>Archaeoglobi</taxon>
        <taxon>Archaeoglobales</taxon>
        <taxon>Archaeoglobaceae</taxon>
        <taxon>Archaeoglobus</taxon>
    </lineage>
</organism>
<evidence type="ECO:0000255" key="1"/>
<keyword id="KW-1185">Reference proteome</keyword>
<keyword id="KW-0732">Signal</keyword>
<name>Y650_ARCFU</name>
<accession>O29607</accession>
<protein>
    <recommendedName>
        <fullName>Uncharacterized protein AF_0650</fullName>
    </recommendedName>
</protein>
<proteinExistence type="inferred from homology"/>
<sequence length="117" mass="12391">MVSEAEFMAALAKFAETSATASAAADRVIAVANVDASRIADEFNALLGWAMKIATLLLEEISKNPSLKAEMAESHQMLFGNLGTIVPALLKFGPYINQILGNFGLSLGKLFGIVLAF</sequence>
<gene>
    <name type="ordered locus">AF_0650</name>
</gene>
<feature type="signal peptide" evidence="1">
    <location>
        <begin position="1"/>
        <end position="23"/>
    </location>
</feature>
<feature type="chain" id="PRO_0000013643" description="Uncharacterized protein AF_0650">
    <location>
        <begin position="24"/>
        <end position="117"/>
    </location>
</feature>
<dbReference type="EMBL" id="AE000782">
    <property type="protein sequence ID" value="AAB90603.1"/>
    <property type="molecule type" value="Genomic_DNA"/>
</dbReference>
<dbReference type="PIR" id="B69331">
    <property type="entry name" value="B69331"/>
</dbReference>
<dbReference type="RefSeq" id="WP_010878153.1">
    <property type="nucleotide sequence ID" value="NC_000917.1"/>
</dbReference>
<dbReference type="SMR" id="O29607"/>
<dbReference type="STRING" id="224325.AF_0650"/>
<dbReference type="PaxDb" id="224325-AF_0650"/>
<dbReference type="EnsemblBacteria" id="AAB90603">
    <property type="protein sequence ID" value="AAB90603"/>
    <property type="gene ID" value="AF_0650"/>
</dbReference>
<dbReference type="GeneID" id="1483868"/>
<dbReference type="KEGG" id="afu:AF_0650"/>
<dbReference type="HOGENOM" id="CLU_2079289_0_0_2"/>
<dbReference type="Proteomes" id="UP000002199">
    <property type="component" value="Chromosome"/>
</dbReference>